<comment type="function">
    <text evidence="1">Succinyl-CoA synthetase functions in the citric acid cycle (TCA), coupling the hydrolysis of succinyl-CoA to the synthesis of either ATP or GTP and thus represents the only step of substrate-level phosphorylation in the TCA. The beta subunit provides nucleotide specificity of the enzyme and binds the substrate succinate, while the binding sites for coenzyme A and phosphate are found in the alpha subunit.</text>
</comment>
<comment type="catalytic activity">
    <reaction evidence="1">
        <text>succinate + ATP + CoA = succinyl-CoA + ADP + phosphate</text>
        <dbReference type="Rhea" id="RHEA:17661"/>
        <dbReference type="ChEBI" id="CHEBI:30031"/>
        <dbReference type="ChEBI" id="CHEBI:30616"/>
        <dbReference type="ChEBI" id="CHEBI:43474"/>
        <dbReference type="ChEBI" id="CHEBI:57287"/>
        <dbReference type="ChEBI" id="CHEBI:57292"/>
        <dbReference type="ChEBI" id="CHEBI:456216"/>
        <dbReference type="EC" id="6.2.1.5"/>
    </reaction>
    <physiologicalReaction direction="right-to-left" evidence="1">
        <dbReference type="Rhea" id="RHEA:17663"/>
    </physiologicalReaction>
</comment>
<comment type="catalytic activity">
    <reaction evidence="1">
        <text>GTP + succinate + CoA = succinyl-CoA + GDP + phosphate</text>
        <dbReference type="Rhea" id="RHEA:22120"/>
        <dbReference type="ChEBI" id="CHEBI:30031"/>
        <dbReference type="ChEBI" id="CHEBI:37565"/>
        <dbReference type="ChEBI" id="CHEBI:43474"/>
        <dbReference type="ChEBI" id="CHEBI:57287"/>
        <dbReference type="ChEBI" id="CHEBI:57292"/>
        <dbReference type="ChEBI" id="CHEBI:58189"/>
    </reaction>
    <physiologicalReaction direction="right-to-left" evidence="1">
        <dbReference type="Rhea" id="RHEA:22122"/>
    </physiologicalReaction>
</comment>
<comment type="cofactor">
    <cofactor evidence="1">
        <name>Mg(2+)</name>
        <dbReference type="ChEBI" id="CHEBI:18420"/>
    </cofactor>
    <text evidence="1">Binds 1 Mg(2+) ion per subunit.</text>
</comment>
<comment type="pathway">
    <text evidence="1">Carbohydrate metabolism; tricarboxylic acid cycle; succinate from succinyl-CoA (ligase route): step 1/1.</text>
</comment>
<comment type="subunit">
    <text evidence="1">Heterotetramer of two alpha and two beta subunits.</text>
</comment>
<comment type="similarity">
    <text evidence="1">Belongs to the succinate/malate CoA ligase beta subunit family.</text>
</comment>
<gene>
    <name evidence="1" type="primary">sucC</name>
    <name type="ordered locus">BWG_0586</name>
</gene>
<reference key="1">
    <citation type="journal article" date="2009" name="J. Bacteriol.">
        <title>Genomic sequencing reveals regulatory mutations and recombinational events in the widely used MC4100 lineage of Escherichia coli K-12.</title>
        <authorList>
            <person name="Ferenci T."/>
            <person name="Zhou Z."/>
            <person name="Betteridge T."/>
            <person name="Ren Y."/>
            <person name="Liu Y."/>
            <person name="Feng L."/>
            <person name="Reeves P.R."/>
            <person name="Wang L."/>
        </authorList>
    </citation>
    <scope>NUCLEOTIDE SEQUENCE [LARGE SCALE GENOMIC DNA]</scope>
    <source>
        <strain>K12 / MC4100 / BW2952</strain>
    </source>
</reference>
<evidence type="ECO:0000255" key="1">
    <source>
        <dbReference type="HAMAP-Rule" id="MF_00558"/>
    </source>
</evidence>
<organism>
    <name type="scientific">Escherichia coli (strain K12 / MC4100 / BW2952)</name>
    <dbReference type="NCBI Taxonomy" id="595496"/>
    <lineage>
        <taxon>Bacteria</taxon>
        <taxon>Pseudomonadati</taxon>
        <taxon>Pseudomonadota</taxon>
        <taxon>Gammaproteobacteria</taxon>
        <taxon>Enterobacterales</taxon>
        <taxon>Enterobacteriaceae</taxon>
        <taxon>Escherichia</taxon>
    </lineage>
</organism>
<feature type="chain" id="PRO_1000212021" description="Succinate--CoA ligase [ADP-forming] subunit beta">
    <location>
        <begin position="1"/>
        <end position="388"/>
    </location>
</feature>
<feature type="domain" description="ATP-grasp" evidence="1">
    <location>
        <begin position="9"/>
        <end position="244"/>
    </location>
</feature>
<feature type="binding site" evidence="1">
    <location>
        <position position="46"/>
    </location>
    <ligand>
        <name>ATP</name>
        <dbReference type="ChEBI" id="CHEBI:30616"/>
    </ligand>
</feature>
<feature type="binding site" evidence="1">
    <location>
        <begin position="53"/>
        <end position="55"/>
    </location>
    <ligand>
        <name>ATP</name>
        <dbReference type="ChEBI" id="CHEBI:30616"/>
    </ligand>
</feature>
<feature type="binding site" evidence="1">
    <location>
        <position position="99"/>
    </location>
    <ligand>
        <name>ATP</name>
        <dbReference type="ChEBI" id="CHEBI:30616"/>
    </ligand>
</feature>
<feature type="binding site" evidence="1">
    <location>
        <position position="102"/>
    </location>
    <ligand>
        <name>ATP</name>
        <dbReference type="ChEBI" id="CHEBI:30616"/>
    </ligand>
</feature>
<feature type="binding site" evidence="1">
    <location>
        <position position="107"/>
    </location>
    <ligand>
        <name>ATP</name>
        <dbReference type="ChEBI" id="CHEBI:30616"/>
    </ligand>
</feature>
<feature type="binding site" evidence="1">
    <location>
        <position position="199"/>
    </location>
    <ligand>
        <name>Mg(2+)</name>
        <dbReference type="ChEBI" id="CHEBI:18420"/>
    </ligand>
</feature>
<feature type="binding site" evidence="1">
    <location>
        <position position="213"/>
    </location>
    <ligand>
        <name>Mg(2+)</name>
        <dbReference type="ChEBI" id="CHEBI:18420"/>
    </ligand>
</feature>
<feature type="binding site" evidence="1">
    <location>
        <position position="264"/>
    </location>
    <ligand>
        <name>substrate</name>
        <note>ligand shared with subunit alpha</note>
    </ligand>
</feature>
<feature type="binding site" evidence="1">
    <location>
        <begin position="321"/>
        <end position="323"/>
    </location>
    <ligand>
        <name>substrate</name>
        <note>ligand shared with subunit alpha</note>
    </ligand>
</feature>
<keyword id="KW-0067">ATP-binding</keyword>
<keyword id="KW-0436">Ligase</keyword>
<keyword id="KW-0460">Magnesium</keyword>
<keyword id="KW-0479">Metal-binding</keyword>
<keyword id="KW-0547">Nucleotide-binding</keyword>
<keyword id="KW-0816">Tricarboxylic acid cycle</keyword>
<accession>C4ZWK2</accession>
<name>SUCC_ECOBW</name>
<protein>
    <recommendedName>
        <fullName evidence="1">Succinate--CoA ligase [ADP-forming] subunit beta</fullName>
        <ecNumber evidence="1">6.2.1.5</ecNumber>
    </recommendedName>
    <alternativeName>
        <fullName evidence="1">Succinyl-CoA synthetase subunit beta</fullName>
        <shortName evidence="1">SCS-beta</shortName>
    </alternativeName>
</protein>
<dbReference type="EC" id="6.2.1.5" evidence="1"/>
<dbReference type="EMBL" id="CP001396">
    <property type="protein sequence ID" value="ACR65590.1"/>
    <property type="molecule type" value="Genomic_DNA"/>
</dbReference>
<dbReference type="RefSeq" id="WP_001048602.1">
    <property type="nucleotide sequence ID" value="NC_012759.1"/>
</dbReference>
<dbReference type="SMR" id="C4ZWK2"/>
<dbReference type="GeneID" id="93776757"/>
<dbReference type="KEGG" id="ebw:BWG_0586"/>
<dbReference type="HOGENOM" id="CLU_037430_4_0_6"/>
<dbReference type="UniPathway" id="UPA00223">
    <property type="reaction ID" value="UER00999"/>
</dbReference>
<dbReference type="GO" id="GO:0005829">
    <property type="term" value="C:cytosol"/>
    <property type="evidence" value="ECO:0007669"/>
    <property type="project" value="TreeGrafter"/>
</dbReference>
<dbReference type="GO" id="GO:0042709">
    <property type="term" value="C:succinate-CoA ligase complex"/>
    <property type="evidence" value="ECO:0007669"/>
    <property type="project" value="TreeGrafter"/>
</dbReference>
<dbReference type="GO" id="GO:0005524">
    <property type="term" value="F:ATP binding"/>
    <property type="evidence" value="ECO:0007669"/>
    <property type="project" value="UniProtKB-UniRule"/>
</dbReference>
<dbReference type="GO" id="GO:0000287">
    <property type="term" value="F:magnesium ion binding"/>
    <property type="evidence" value="ECO:0007669"/>
    <property type="project" value="UniProtKB-UniRule"/>
</dbReference>
<dbReference type="GO" id="GO:0004775">
    <property type="term" value="F:succinate-CoA ligase (ADP-forming) activity"/>
    <property type="evidence" value="ECO:0007669"/>
    <property type="project" value="UniProtKB-UniRule"/>
</dbReference>
<dbReference type="GO" id="GO:0004776">
    <property type="term" value="F:succinate-CoA ligase (GDP-forming) activity"/>
    <property type="evidence" value="ECO:0007669"/>
    <property type="project" value="RHEA"/>
</dbReference>
<dbReference type="GO" id="GO:0006104">
    <property type="term" value="P:succinyl-CoA metabolic process"/>
    <property type="evidence" value="ECO:0007669"/>
    <property type="project" value="TreeGrafter"/>
</dbReference>
<dbReference type="GO" id="GO:0006099">
    <property type="term" value="P:tricarboxylic acid cycle"/>
    <property type="evidence" value="ECO:0007669"/>
    <property type="project" value="UniProtKB-UniRule"/>
</dbReference>
<dbReference type="FunFam" id="3.30.1490.20:FF:000002">
    <property type="entry name" value="Succinate--CoA ligase [ADP-forming] subunit beta"/>
    <property type="match status" value="1"/>
</dbReference>
<dbReference type="FunFam" id="3.30.470.20:FF:000002">
    <property type="entry name" value="Succinate--CoA ligase [ADP-forming] subunit beta"/>
    <property type="match status" value="1"/>
</dbReference>
<dbReference type="FunFam" id="3.40.50.261:FF:000001">
    <property type="entry name" value="Succinate--CoA ligase [ADP-forming] subunit beta"/>
    <property type="match status" value="1"/>
</dbReference>
<dbReference type="Gene3D" id="3.30.1490.20">
    <property type="entry name" value="ATP-grasp fold, A domain"/>
    <property type="match status" value="1"/>
</dbReference>
<dbReference type="Gene3D" id="3.30.470.20">
    <property type="entry name" value="ATP-grasp fold, B domain"/>
    <property type="match status" value="1"/>
</dbReference>
<dbReference type="Gene3D" id="3.40.50.261">
    <property type="entry name" value="Succinyl-CoA synthetase domains"/>
    <property type="match status" value="1"/>
</dbReference>
<dbReference type="HAMAP" id="MF_00558">
    <property type="entry name" value="Succ_CoA_beta"/>
    <property type="match status" value="1"/>
</dbReference>
<dbReference type="InterPro" id="IPR011761">
    <property type="entry name" value="ATP-grasp"/>
</dbReference>
<dbReference type="InterPro" id="IPR013650">
    <property type="entry name" value="ATP-grasp_succ-CoA_synth-type"/>
</dbReference>
<dbReference type="InterPro" id="IPR013815">
    <property type="entry name" value="ATP_grasp_subdomain_1"/>
</dbReference>
<dbReference type="InterPro" id="IPR017866">
    <property type="entry name" value="Succ-CoA_synthase_bsu_CS"/>
</dbReference>
<dbReference type="InterPro" id="IPR005811">
    <property type="entry name" value="SUCC_ACL_C"/>
</dbReference>
<dbReference type="InterPro" id="IPR005809">
    <property type="entry name" value="Succ_CoA_ligase-like_bsu"/>
</dbReference>
<dbReference type="InterPro" id="IPR016102">
    <property type="entry name" value="Succinyl-CoA_synth-like"/>
</dbReference>
<dbReference type="NCBIfam" id="NF001913">
    <property type="entry name" value="PRK00696.1"/>
    <property type="match status" value="1"/>
</dbReference>
<dbReference type="NCBIfam" id="TIGR01016">
    <property type="entry name" value="sucCoAbeta"/>
    <property type="match status" value="1"/>
</dbReference>
<dbReference type="PANTHER" id="PTHR11815:SF10">
    <property type="entry name" value="SUCCINATE--COA LIGASE [GDP-FORMING] SUBUNIT BETA, MITOCHONDRIAL"/>
    <property type="match status" value="1"/>
</dbReference>
<dbReference type="PANTHER" id="PTHR11815">
    <property type="entry name" value="SUCCINYL-COA SYNTHETASE BETA CHAIN"/>
    <property type="match status" value="1"/>
</dbReference>
<dbReference type="Pfam" id="PF08442">
    <property type="entry name" value="ATP-grasp_2"/>
    <property type="match status" value="1"/>
</dbReference>
<dbReference type="Pfam" id="PF00549">
    <property type="entry name" value="Ligase_CoA"/>
    <property type="match status" value="1"/>
</dbReference>
<dbReference type="PIRSF" id="PIRSF001554">
    <property type="entry name" value="SucCS_beta"/>
    <property type="match status" value="1"/>
</dbReference>
<dbReference type="SUPFAM" id="SSF56059">
    <property type="entry name" value="Glutathione synthetase ATP-binding domain-like"/>
    <property type="match status" value="1"/>
</dbReference>
<dbReference type="SUPFAM" id="SSF52210">
    <property type="entry name" value="Succinyl-CoA synthetase domains"/>
    <property type="match status" value="1"/>
</dbReference>
<dbReference type="PROSITE" id="PS50975">
    <property type="entry name" value="ATP_GRASP"/>
    <property type="match status" value="1"/>
</dbReference>
<dbReference type="PROSITE" id="PS01217">
    <property type="entry name" value="SUCCINYL_COA_LIG_3"/>
    <property type="match status" value="1"/>
</dbReference>
<proteinExistence type="inferred from homology"/>
<sequence length="388" mass="41393">MNLHEYQAKQLFARYGLPAPVGYACTTPREAEEAASKIGAGPWVVKCQVHAGGRGKAGGVKVVNSKEDIRAFAENWLGKRLVTYQTDANGQPVNQILVEAATDIAKELYLGAVVDRSSRRVVFMASTEGGVEIEKVAEETPHLIHKVALDPLTGPMPYQGRELAFKLGLEGKLVQQFTKIFMGLATIFLERDLALIEINPLVITKQGDLICLDGKLGADGNALFRQPDLREMRDQSQEDPREAQAAQWELNYVALDGNIGCMVNGAGLAMGTMDIVKLHGGEPANFLDVGGGATKERVTEAFKIILSDDKVKAVLVNIFGGIVRCDLIADGIIGAVAEVGVNVPVVVRLEGNNAELGAKKLADSGLNIIAAKGLTDAAQQVVAAVEGK</sequence>